<name>RL11_METM5</name>
<gene>
    <name evidence="1" type="primary">rpl11</name>
    <name type="ordered locus">MmarC5_0145</name>
</gene>
<reference key="1">
    <citation type="submission" date="2007-03" db="EMBL/GenBank/DDBJ databases">
        <title>Complete sequence of chromosome of Methanococcus maripaludis C5.</title>
        <authorList>
            <consortium name="US DOE Joint Genome Institute"/>
            <person name="Copeland A."/>
            <person name="Lucas S."/>
            <person name="Lapidus A."/>
            <person name="Barry K."/>
            <person name="Glavina del Rio T."/>
            <person name="Dalin E."/>
            <person name="Tice H."/>
            <person name="Pitluck S."/>
            <person name="Chertkov O."/>
            <person name="Brettin T."/>
            <person name="Bruce D."/>
            <person name="Han C."/>
            <person name="Detter J.C."/>
            <person name="Schmutz J."/>
            <person name="Larimer F."/>
            <person name="Land M."/>
            <person name="Hauser L."/>
            <person name="Kyrpides N."/>
            <person name="Mikhailova N."/>
            <person name="Sieprawska-Lupa M."/>
            <person name="Whitman W.B."/>
            <person name="Richardson P."/>
        </authorList>
    </citation>
    <scope>NUCLEOTIDE SEQUENCE [LARGE SCALE GENOMIC DNA]</scope>
    <source>
        <strain>C5 / ATCC BAA-1333</strain>
    </source>
</reference>
<dbReference type="EMBL" id="CP000609">
    <property type="protein sequence ID" value="ABO34462.1"/>
    <property type="molecule type" value="Genomic_DNA"/>
</dbReference>
<dbReference type="RefSeq" id="WP_011867922.1">
    <property type="nucleotide sequence ID" value="NC_009135.1"/>
</dbReference>
<dbReference type="SMR" id="A4FW91"/>
<dbReference type="STRING" id="402880.MmarC5_0145"/>
<dbReference type="GeneID" id="4927823"/>
<dbReference type="KEGG" id="mmq:MmarC5_0145"/>
<dbReference type="eggNOG" id="arCOG04372">
    <property type="taxonomic scope" value="Archaea"/>
</dbReference>
<dbReference type="HOGENOM" id="CLU_074237_4_0_2"/>
<dbReference type="OrthoDB" id="8842at2157"/>
<dbReference type="Proteomes" id="UP000000253">
    <property type="component" value="Chromosome"/>
</dbReference>
<dbReference type="GO" id="GO:0015934">
    <property type="term" value="C:large ribosomal subunit"/>
    <property type="evidence" value="ECO:0007669"/>
    <property type="project" value="TreeGrafter"/>
</dbReference>
<dbReference type="GO" id="GO:0070180">
    <property type="term" value="F:large ribosomal subunit rRNA binding"/>
    <property type="evidence" value="ECO:0007669"/>
    <property type="project" value="UniProtKB-UniRule"/>
</dbReference>
<dbReference type="GO" id="GO:0003735">
    <property type="term" value="F:structural constituent of ribosome"/>
    <property type="evidence" value="ECO:0007669"/>
    <property type="project" value="InterPro"/>
</dbReference>
<dbReference type="GO" id="GO:0006412">
    <property type="term" value="P:translation"/>
    <property type="evidence" value="ECO:0007669"/>
    <property type="project" value="UniProtKB-UniRule"/>
</dbReference>
<dbReference type="CDD" id="cd00349">
    <property type="entry name" value="Ribosomal_L11"/>
    <property type="match status" value="1"/>
</dbReference>
<dbReference type="FunFam" id="1.10.10.250:FF:000006">
    <property type="entry name" value="50S ribosomal protein L11"/>
    <property type="match status" value="1"/>
</dbReference>
<dbReference type="FunFam" id="3.30.1550.10:FF:000007">
    <property type="entry name" value="50S ribosomal protein L11"/>
    <property type="match status" value="1"/>
</dbReference>
<dbReference type="Gene3D" id="1.10.10.250">
    <property type="entry name" value="Ribosomal protein L11, C-terminal domain"/>
    <property type="match status" value="1"/>
</dbReference>
<dbReference type="Gene3D" id="3.30.1550.10">
    <property type="entry name" value="Ribosomal protein L11/L12, N-terminal domain"/>
    <property type="match status" value="1"/>
</dbReference>
<dbReference type="HAMAP" id="MF_00736">
    <property type="entry name" value="Ribosomal_uL11"/>
    <property type="match status" value="1"/>
</dbReference>
<dbReference type="InterPro" id="IPR000911">
    <property type="entry name" value="Ribosomal_uL11"/>
</dbReference>
<dbReference type="InterPro" id="IPR020783">
    <property type="entry name" value="Ribosomal_uL11_C"/>
</dbReference>
<dbReference type="InterPro" id="IPR036769">
    <property type="entry name" value="Ribosomal_uL11_C_sf"/>
</dbReference>
<dbReference type="InterPro" id="IPR020785">
    <property type="entry name" value="Ribosomal_uL11_CS"/>
</dbReference>
<dbReference type="InterPro" id="IPR020784">
    <property type="entry name" value="Ribosomal_uL11_N"/>
</dbReference>
<dbReference type="InterPro" id="IPR036796">
    <property type="entry name" value="Ribosomal_uL11_N_sf"/>
</dbReference>
<dbReference type="NCBIfam" id="NF002232">
    <property type="entry name" value="PRK01143.1"/>
    <property type="match status" value="1"/>
</dbReference>
<dbReference type="PANTHER" id="PTHR11661">
    <property type="entry name" value="60S RIBOSOMAL PROTEIN L12"/>
    <property type="match status" value="1"/>
</dbReference>
<dbReference type="PANTHER" id="PTHR11661:SF1">
    <property type="entry name" value="LARGE RIBOSOMAL SUBUNIT PROTEIN UL11M"/>
    <property type="match status" value="1"/>
</dbReference>
<dbReference type="Pfam" id="PF00298">
    <property type="entry name" value="Ribosomal_L11"/>
    <property type="match status" value="1"/>
</dbReference>
<dbReference type="Pfam" id="PF03946">
    <property type="entry name" value="Ribosomal_L11_N"/>
    <property type="match status" value="1"/>
</dbReference>
<dbReference type="SMART" id="SM00649">
    <property type="entry name" value="RL11"/>
    <property type="match status" value="1"/>
</dbReference>
<dbReference type="SUPFAM" id="SSF54747">
    <property type="entry name" value="Ribosomal L11/L12e N-terminal domain"/>
    <property type="match status" value="1"/>
</dbReference>
<dbReference type="SUPFAM" id="SSF46906">
    <property type="entry name" value="Ribosomal protein L11, C-terminal domain"/>
    <property type="match status" value="1"/>
</dbReference>
<dbReference type="PROSITE" id="PS00359">
    <property type="entry name" value="RIBOSOMAL_L11"/>
    <property type="match status" value="1"/>
</dbReference>
<keyword id="KW-0687">Ribonucleoprotein</keyword>
<keyword id="KW-0689">Ribosomal protein</keyword>
<keyword id="KW-0694">RNA-binding</keyword>
<keyword id="KW-0699">rRNA-binding</keyword>
<feature type="chain" id="PRO_1000046212" description="Large ribosomal subunit protein uL11">
    <location>
        <begin position="1"/>
        <end position="159"/>
    </location>
</feature>
<comment type="function">
    <text evidence="1">Forms part of the ribosomal stalk which helps the ribosome interact with GTP-bound translation factors.</text>
</comment>
<comment type="subunit">
    <text evidence="1">Part of the ribosomal stalk of the 50S ribosomal subunit. Interacts with L10 and the large rRNA to form the base of the stalk. L10 forms an elongated spine to which L12 dimers bind in a sequential fashion forming a multimeric L10(L12)X complex.</text>
</comment>
<comment type="similarity">
    <text evidence="1">Belongs to the universal ribosomal protein uL11 family.</text>
</comment>
<protein>
    <recommendedName>
        <fullName evidence="1">Large ribosomal subunit protein uL11</fullName>
    </recommendedName>
    <alternativeName>
        <fullName evidence="2">50S ribosomal protein L11</fullName>
    </alternativeName>
</protein>
<accession>A4FW91</accession>
<sequence length="159" mass="16799">MAEQVVEILVSGGKATAGPPLGPAIGPLGVNIMQVVQKINDMTKDYDGMSVPVKVIVDTDKRTFEVEVGIPPASALVKKELGIATGAQEPKHQVAGNLTMEQVVKIAKMKQDAMLAYNLKNASKEVIGTCVSVGVNVEGMTPKEAQKAIDAGQFDSYFN</sequence>
<organism>
    <name type="scientific">Methanococcus maripaludis (strain C5 / ATCC BAA-1333)</name>
    <dbReference type="NCBI Taxonomy" id="402880"/>
    <lineage>
        <taxon>Archaea</taxon>
        <taxon>Methanobacteriati</taxon>
        <taxon>Methanobacteriota</taxon>
        <taxon>Methanomada group</taxon>
        <taxon>Methanococci</taxon>
        <taxon>Methanococcales</taxon>
        <taxon>Methanococcaceae</taxon>
        <taxon>Methanococcus</taxon>
    </lineage>
</organism>
<evidence type="ECO:0000255" key="1">
    <source>
        <dbReference type="HAMAP-Rule" id="MF_00736"/>
    </source>
</evidence>
<evidence type="ECO:0000305" key="2"/>
<proteinExistence type="inferred from homology"/>